<accession>Q3B7I2</accession>
<accession>A6NGX3</accession>
<protein>
    <recommendedName>
        <fullName>Protein canopy homolog 1</fullName>
    </recommendedName>
</protein>
<proteinExistence type="evidence at protein level"/>
<dbReference type="EMBL" id="AC009403">
    <property type="status" value="NOT_ANNOTATED_CDS"/>
    <property type="molecule type" value="Genomic_DNA"/>
</dbReference>
<dbReference type="EMBL" id="CH236954">
    <property type="protein sequence ID" value="EAL23910.1"/>
    <property type="molecule type" value="Genomic_DNA"/>
</dbReference>
<dbReference type="EMBL" id="BC105732">
    <property type="protein sequence ID" value="AAI05733.1"/>
    <property type="molecule type" value="mRNA"/>
</dbReference>
<dbReference type="EMBL" id="BC105733">
    <property type="protein sequence ID" value="AAI05734.1"/>
    <property type="molecule type" value="mRNA"/>
</dbReference>
<dbReference type="EMBL" id="BC105734">
    <property type="protein sequence ID" value="AAI05735.1"/>
    <property type="molecule type" value="mRNA"/>
</dbReference>
<dbReference type="EMBL" id="BC107598">
    <property type="protein sequence ID" value="AAI07599.1"/>
    <property type="molecule type" value="mRNA"/>
</dbReference>
<dbReference type="CCDS" id="CCDS43684.1"/>
<dbReference type="RefSeq" id="NP_001096646.1">
    <property type="nucleotide sequence ID" value="NM_001103176.2"/>
</dbReference>
<dbReference type="RefSeq" id="NP_001356743.1">
    <property type="nucleotide sequence ID" value="NM_001369814.1"/>
</dbReference>
<dbReference type="RefSeq" id="NP_001356744.1">
    <property type="nucleotide sequence ID" value="NM_001369815.1"/>
</dbReference>
<dbReference type="RefSeq" id="NP_001356745.1">
    <property type="nucleotide sequence ID" value="NM_001369816.1"/>
</dbReference>
<dbReference type="RefSeq" id="NP_001356747.2">
    <property type="nucleotide sequence ID" value="NM_001369818.2"/>
</dbReference>
<dbReference type="RefSeq" id="NP_001356749.1">
    <property type="nucleotide sequence ID" value="NM_001369820.1"/>
</dbReference>
<dbReference type="RefSeq" id="NP_001356750.1">
    <property type="nucleotide sequence ID" value="NM_001369821.1"/>
</dbReference>
<dbReference type="FunCoup" id="Q3B7I2">
    <property type="interactions" value="3"/>
</dbReference>
<dbReference type="STRING" id="9606.ENSP00000317439"/>
<dbReference type="BioMuta" id="CNPY1"/>
<dbReference type="DMDM" id="121942376"/>
<dbReference type="PaxDb" id="9606-ENSP00000317439"/>
<dbReference type="PeptideAtlas" id="Q3B7I2"/>
<dbReference type="ProteomicsDB" id="61653"/>
<dbReference type="Antibodypedia" id="49629">
    <property type="antibodies" value="10 antibodies from 8 providers"/>
</dbReference>
<dbReference type="DNASU" id="285888"/>
<dbReference type="Ensembl" id="ENST00000321736.5">
    <property type="protein sequence ID" value="ENSP00000317439.5"/>
    <property type="gene ID" value="ENSG00000146910.14"/>
</dbReference>
<dbReference type="Ensembl" id="ENST00000406197.5">
    <property type="protein sequence ID" value="ENSP00000384514.1"/>
    <property type="gene ID" value="ENSG00000146910.14"/>
</dbReference>
<dbReference type="GeneID" id="285888"/>
<dbReference type="KEGG" id="hsa:285888"/>
<dbReference type="UCSC" id="uc003wmc.2">
    <property type="organism name" value="human"/>
</dbReference>
<dbReference type="AGR" id="HGNC:27786"/>
<dbReference type="CTD" id="285888"/>
<dbReference type="DisGeNET" id="285888"/>
<dbReference type="GeneCards" id="CNPY1"/>
<dbReference type="HGNC" id="HGNC:27786">
    <property type="gene designation" value="CNPY1"/>
</dbReference>
<dbReference type="HPA" id="ENSG00000146910">
    <property type="expression patterns" value="Tissue enriched (brain)"/>
</dbReference>
<dbReference type="MIM" id="612493">
    <property type="type" value="gene"/>
</dbReference>
<dbReference type="neXtProt" id="NX_Q3B7I2"/>
<dbReference type="OpenTargets" id="ENSG00000146910"/>
<dbReference type="PharmGKB" id="PA162382571"/>
<dbReference type="VEuPathDB" id="HostDB:ENSG00000146910"/>
<dbReference type="eggNOG" id="KOG3782">
    <property type="taxonomic scope" value="Eukaryota"/>
</dbReference>
<dbReference type="GeneTree" id="ENSGT00940000161119"/>
<dbReference type="HOGENOM" id="CLU_095726_3_0_1"/>
<dbReference type="InParanoid" id="Q3B7I2"/>
<dbReference type="OrthoDB" id="192915at2759"/>
<dbReference type="PAN-GO" id="Q3B7I2">
    <property type="GO annotations" value="1 GO annotation based on evolutionary models"/>
</dbReference>
<dbReference type="PhylomeDB" id="Q3B7I2"/>
<dbReference type="PathwayCommons" id="Q3B7I2"/>
<dbReference type="BioGRID-ORCS" id="285888">
    <property type="hits" value="11 hits in 1140 CRISPR screens"/>
</dbReference>
<dbReference type="ChiTaRS" id="CNPY1">
    <property type="organism name" value="human"/>
</dbReference>
<dbReference type="GenomeRNAi" id="285888"/>
<dbReference type="Pharos" id="Q3B7I2">
    <property type="development level" value="Tdark"/>
</dbReference>
<dbReference type="PRO" id="PR:Q3B7I2"/>
<dbReference type="Proteomes" id="UP000005640">
    <property type="component" value="Chromosome 7"/>
</dbReference>
<dbReference type="RNAct" id="Q3B7I2">
    <property type="molecule type" value="protein"/>
</dbReference>
<dbReference type="Bgee" id="ENSG00000146910">
    <property type="expression patterns" value="Expressed in cerebellar hemisphere and 39 other cell types or tissues"/>
</dbReference>
<dbReference type="ExpressionAtlas" id="Q3B7I2">
    <property type="expression patterns" value="baseline and differential"/>
</dbReference>
<dbReference type="InterPro" id="IPR042415">
    <property type="entry name" value="CNPY"/>
</dbReference>
<dbReference type="InterPro" id="IPR021852">
    <property type="entry name" value="DUF3456"/>
</dbReference>
<dbReference type="PANTHER" id="PTHR13341:SF4">
    <property type="entry name" value="CANOPY FGF SIGNALING REGULATOR 1"/>
    <property type="match status" value="1"/>
</dbReference>
<dbReference type="PANTHER" id="PTHR13341">
    <property type="entry name" value="MIR-INTERACTING SAPOSIN-LIKE PROTEIN"/>
    <property type="match status" value="1"/>
</dbReference>
<dbReference type="Pfam" id="PF11938">
    <property type="entry name" value="DUF3456"/>
    <property type="match status" value="1"/>
</dbReference>
<evidence type="ECO:0000305" key="1"/>
<gene>
    <name type="primary">CNPY1</name>
</gene>
<keyword id="KW-1267">Proteomics identification</keyword>
<keyword id="KW-1185">Reference proteome</keyword>
<reference key="1">
    <citation type="journal article" date="2003" name="Nature">
        <title>The DNA sequence of human chromosome 7.</title>
        <authorList>
            <person name="Hillier L.W."/>
            <person name="Fulton R.S."/>
            <person name="Fulton L.A."/>
            <person name="Graves T.A."/>
            <person name="Pepin K.H."/>
            <person name="Wagner-McPherson C."/>
            <person name="Layman D."/>
            <person name="Maas J."/>
            <person name="Jaeger S."/>
            <person name="Walker R."/>
            <person name="Wylie K."/>
            <person name="Sekhon M."/>
            <person name="Becker M.C."/>
            <person name="O'Laughlin M.D."/>
            <person name="Schaller M.E."/>
            <person name="Fewell G.A."/>
            <person name="Delehaunty K.D."/>
            <person name="Miner T.L."/>
            <person name="Nash W.E."/>
            <person name="Cordes M."/>
            <person name="Du H."/>
            <person name="Sun H."/>
            <person name="Edwards J."/>
            <person name="Bradshaw-Cordum H."/>
            <person name="Ali J."/>
            <person name="Andrews S."/>
            <person name="Isak A."/>
            <person name="Vanbrunt A."/>
            <person name="Nguyen C."/>
            <person name="Du F."/>
            <person name="Lamar B."/>
            <person name="Courtney L."/>
            <person name="Kalicki J."/>
            <person name="Ozersky P."/>
            <person name="Bielicki L."/>
            <person name="Scott K."/>
            <person name="Holmes A."/>
            <person name="Harkins R."/>
            <person name="Harris A."/>
            <person name="Strong C.M."/>
            <person name="Hou S."/>
            <person name="Tomlinson C."/>
            <person name="Dauphin-Kohlberg S."/>
            <person name="Kozlowicz-Reilly A."/>
            <person name="Leonard S."/>
            <person name="Rohlfing T."/>
            <person name="Rock S.M."/>
            <person name="Tin-Wollam A.-M."/>
            <person name="Abbott A."/>
            <person name="Minx P."/>
            <person name="Maupin R."/>
            <person name="Strowmatt C."/>
            <person name="Latreille P."/>
            <person name="Miller N."/>
            <person name="Johnson D."/>
            <person name="Murray J."/>
            <person name="Woessner J.P."/>
            <person name="Wendl M.C."/>
            <person name="Yang S.-P."/>
            <person name="Schultz B.R."/>
            <person name="Wallis J.W."/>
            <person name="Spieth J."/>
            <person name="Bieri T.A."/>
            <person name="Nelson J.O."/>
            <person name="Berkowicz N."/>
            <person name="Wohldmann P.E."/>
            <person name="Cook L.L."/>
            <person name="Hickenbotham M.T."/>
            <person name="Eldred J."/>
            <person name="Williams D."/>
            <person name="Bedell J.A."/>
            <person name="Mardis E.R."/>
            <person name="Clifton S.W."/>
            <person name="Chissoe S.L."/>
            <person name="Marra M.A."/>
            <person name="Raymond C."/>
            <person name="Haugen E."/>
            <person name="Gillett W."/>
            <person name="Zhou Y."/>
            <person name="James R."/>
            <person name="Phelps K."/>
            <person name="Iadanoto S."/>
            <person name="Bubb K."/>
            <person name="Simms E."/>
            <person name="Levy R."/>
            <person name="Clendenning J."/>
            <person name="Kaul R."/>
            <person name="Kent W.J."/>
            <person name="Furey T.S."/>
            <person name="Baertsch R.A."/>
            <person name="Brent M.R."/>
            <person name="Keibler E."/>
            <person name="Flicek P."/>
            <person name="Bork P."/>
            <person name="Suyama M."/>
            <person name="Bailey J.A."/>
            <person name="Portnoy M.E."/>
            <person name="Torrents D."/>
            <person name="Chinwalla A.T."/>
            <person name="Gish W.R."/>
            <person name="Eddy S.R."/>
            <person name="McPherson J.D."/>
            <person name="Olson M.V."/>
            <person name="Eichler E.E."/>
            <person name="Green E.D."/>
            <person name="Waterston R.H."/>
            <person name="Wilson R.K."/>
        </authorList>
    </citation>
    <scope>NUCLEOTIDE SEQUENCE [LARGE SCALE GENOMIC DNA]</scope>
</reference>
<reference key="2">
    <citation type="journal article" date="2003" name="Science">
        <title>Human chromosome 7: DNA sequence and biology.</title>
        <authorList>
            <person name="Scherer S.W."/>
            <person name="Cheung J."/>
            <person name="MacDonald J.R."/>
            <person name="Osborne L.R."/>
            <person name="Nakabayashi K."/>
            <person name="Herbrick J.-A."/>
            <person name="Carson A.R."/>
            <person name="Parker-Katiraee L."/>
            <person name="Skaug J."/>
            <person name="Khaja R."/>
            <person name="Zhang J."/>
            <person name="Hudek A.K."/>
            <person name="Li M."/>
            <person name="Haddad M."/>
            <person name="Duggan G.E."/>
            <person name="Fernandez B.A."/>
            <person name="Kanematsu E."/>
            <person name="Gentles S."/>
            <person name="Christopoulos C.C."/>
            <person name="Choufani S."/>
            <person name="Kwasnicka D."/>
            <person name="Zheng X.H."/>
            <person name="Lai Z."/>
            <person name="Nusskern D.R."/>
            <person name="Zhang Q."/>
            <person name="Gu Z."/>
            <person name="Lu F."/>
            <person name="Zeesman S."/>
            <person name="Nowaczyk M.J."/>
            <person name="Teshima I."/>
            <person name="Chitayat D."/>
            <person name="Shuman C."/>
            <person name="Weksberg R."/>
            <person name="Zackai E.H."/>
            <person name="Grebe T.A."/>
            <person name="Cox S.R."/>
            <person name="Kirkpatrick S.J."/>
            <person name="Rahman N."/>
            <person name="Friedman J.M."/>
            <person name="Heng H.H.Q."/>
            <person name="Pelicci P.G."/>
            <person name="Lo-Coco F."/>
            <person name="Belloni E."/>
            <person name="Shaffer L.G."/>
            <person name="Pober B."/>
            <person name="Morton C.C."/>
            <person name="Gusella J.F."/>
            <person name="Bruns G.A.P."/>
            <person name="Korf B.R."/>
            <person name="Quade B.J."/>
            <person name="Ligon A.H."/>
            <person name="Ferguson H."/>
            <person name="Higgins A.W."/>
            <person name="Leach N.T."/>
            <person name="Herrick S.R."/>
            <person name="Lemyre E."/>
            <person name="Farra C.G."/>
            <person name="Kim H.-G."/>
            <person name="Summers A.M."/>
            <person name="Gripp K.W."/>
            <person name="Roberts W."/>
            <person name="Szatmari P."/>
            <person name="Winsor E.J.T."/>
            <person name="Grzeschik K.-H."/>
            <person name="Teebi A."/>
            <person name="Minassian B.A."/>
            <person name="Kere J."/>
            <person name="Armengol L."/>
            <person name="Pujana M.A."/>
            <person name="Estivill X."/>
            <person name="Wilson M.D."/>
            <person name="Koop B.F."/>
            <person name="Tosi S."/>
            <person name="Moore G.E."/>
            <person name="Boright A.P."/>
            <person name="Zlotorynski E."/>
            <person name="Kerem B."/>
            <person name="Kroisel P.M."/>
            <person name="Petek E."/>
            <person name="Oscier D.G."/>
            <person name="Mould S.J."/>
            <person name="Doehner H."/>
            <person name="Doehner K."/>
            <person name="Rommens J.M."/>
            <person name="Vincent J.B."/>
            <person name="Venter J.C."/>
            <person name="Li P.W."/>
            <person name="Mural R.J."/>
            <person name="Adams M.D."/>
            <person name="Tsui L.-C."/>
        </authorList>
    </citation>
    <scope>NUCLEOTIDE SEQUENCE [LARGE SCALE GENOMIC DNA]</scope>
</reference>
<reference key="3">
    <citation type="journal article" date="2004" name="Genome Res.">
        <title>The status, quality, and expansion of the NIH full-length cDNA project: the Mammalian Gene Collection (MGC).</title>
        <authorList>
            <consortium name="The MGC Project Team"/>
        </authorList>
    </citation>
    <scope>NUCLEOTIDE SEQUENCE [LARGE SCALE MRNA]</scope>
</reference>
<organism>
    <name type="scientific">Homo sapiens</name>
    <name type="common">Human</name>
    <dbReference type="NCBI Taxonomy" id="9606"/>
    <lineage>
        <taxon>Eukaryota</taxon>
        <taxon>Metazoa</taxon>
        <taxon>Chordata</taxon>
        <taxon>Craniata</taxon>
        <taxon>Vertebrata</taxon>
        <taxon>Euteleostomi</taxon>
        <taxon>Mammalia</taxon>
        <taxon>Eutheria</taxon>
        <taxon>Euarchontoglires</taxon>
        <taxon>Primates</taxon>
        <taxon>Haplorrhini</taxon>
        <taxon>Catarrhini</taxon>
        <taxon>Hominidae</taxon>
        <taxon>Homo</taxon>
    </lineage>
</organism>
<feature type="chain" id="PRO_0000314015" description="Protein canopy homolog 1">
    <location>
        <begin position="1"/>
        <end position="92"/>
    </location>
</feature>
<sequence>MNDYKLEEDPVTKERTFKRFAPRKGDKIYQEFKKLYFYSDAYRPLKFACETIIEEYEDEISSLIAQETHYLADKLCSEKSDLCETSANHTEL</sequence>
<name>CNPY1_HUMAN</name>
<comment type="similarity">
    <text evidence="1">Belongs to the canopy family.</text>
</comment>